<dbReference type="EMBL" id="CM001231">
    <property type="protein sequence ID" value="EHA56104.1"/>
    <property type="molecule type" value="Genomic_DNA"/>
</dbReference>
<dbReference type="RefSeq" id="XP_003708716.1">
    <property type="nucleotide sequence ID" value="XM_003708668.1"/>
</dbReference>
<dbReference type="SMR" id="A4QZL9"/>
<dbReference type="FunCoup" id="A4QZL9">
    <property type="interactions" value="1325"/>
</dbReference>
<dbReference type="STRING" id="242507.A4QZL9"/>
<dbReference type="EnsemblFungi" id="MGG_01978T0">
    <property type="protein sequence ID" value="MGG_01978T0"/>
    <property type="gene ID" value="MGG_01978"/>
</dbReference>
<dbReference type="GeneID" id="2681097"/>
<dbReference type="KEGG" id="mgr:MGG_01978"/>
<dbReference type="VEuPathDB" id="FungiDB:MGG_01978"/>
<dbReference type="eggNOG" id="KOG2314">
    <property type="taxonomic scope" value="Eukaryota"/>
</dbReference>
<dbReference type="HOGENOM" id="CLU_011152_4_0_1"/>
<dbReference type="InParanoid" id="A4QZL9"/>
<dbReference type="OMA" id="LWGGPQF"/>
<dbReference type="OrthoDB" id="10250414at2759"/>
<dbReference type="Proteomes" id="UP000009058">
    <property type="component" value="Chromosome 1"/>
</dbReference>
<dbReference type="GO" id="GO:0010494">
    <property type="term" value="C:cytoplasmic stress granule"/>
    <property type="evidence" value="ECO:0007669"/>
    <property type="project" value="EnsemblFungi"/>
</dbReference>
<dbReference type="GO" id="GO:0016282">
    <property type="term" value="C:eukaryotic 43S preinitiation complex"/>
    <property type="evidence" value="ECO:0007669"/>
    <property type="project" value="UniProtKB-UniRule"/>
</dbReference>
<dbReference type="GO" id="GO:0033290">
    <property type="term" value="C:eukaryotic 48S preinitiation complex"/>
    <property type="evidence" value="ECO:0007669"/>
    <property type="project" value="UniProtKB-UniRule"/>
</dbReference>
<dbReference type="GO" id="GO:0071540">
    <property type="term" value="C:eukaryotic translation initiation factor 3 complex, eIF3e"/>
    <property type="evidence" value="ECO:0007669"/>
    <property type="project" value="EnsemblFungi"/>
</dbReference>
<dbReference type="GO" id="GO:0071541">
    <property type="term" value="C:eukaryotic translation initiation factor 3 complex, eIF3m"/>
    <property type="evidence" value="ECO:0007669"/>
    <property type="project" value="EnsemblFungi"/>
</dbReference>
<dbReference type="GO" id="GO:0043614">
    <property type="term" value="C:multi-eIF complex"/>
    <property type="evidence" value="ECO:0007669"/>
    <property type="project" value="EnsemblFungi"/>
</dbReference>
<dbReference type="GO" id="GO:0042802">
    <property type="term" value="F:identical protein binding"/>
    <property type="evidence" value="ECO:0007669"/>
    <property type="project" value="EnsemblFungi"/>
</dbReference>
<dbReference type="GO" id="GO:0003723">
    <property type="term" value="F:RNA binding"/>
    <property type="evidence" value="ECO:0007669"/>
    <property type="project" value="UniProtKB-UniRule"/>
</dbReference>
<dbReference type="GO" id="GO:0003743">
    <property type="term" value="F:translation initiation factor activity"/>
    <property type="evidence" value="ECO:0007669"/>
    <property type="project" value="UniProtKB-UniRule"/>
</dbReference>
<dbReference type="GO" id="GO:0031369">
    <property type="term" value="F:translation initiation factor binding"/>
    <property type="evidence" value="ECO:0007669"/>
    <property type="project" value="InterPro"/>
</dbReference>
<dbReference type="GO" id="GO:0001732">
    <property type="term" value="P:formation of cytoplasmic translation initiation complex"/>
    <property type="evidence" value="ECO:0007669"/>
    <property type="project" value="UniProtKB-UniRule"/>
</dbReference>
<dbReference type="CDD" id="cd12278">
    <property type="entry name" value="RRM_eIF3B"/>
    <property type="match status" value="1"/>
</dbReference>
<dbReference type="FunFam" id="2.130.10.10:FF:000419">
    <property type="entry name" value="Eukaryotic translation initiation factor 3 subunit B"/>
    <property type="match status" value="1"/>
</dbReference>
<dbReference type="FunFam" id="3.30.70.330:FF:000235">
    <property type="entry name" value="Eukaryotic translation initiation factor 3 subunit B"/>
    <property type="match status" value="1"/>
</dbReference>
<dbReference type="Gene3D" id="3.30.70.330">
    <property type="match status" value="1"/>
</dbReference>
<dbReference type="Gene3D" id="2.130.10.10">
    <property type="entry name" value="YVTN repeat-like/Quinoprotein amine dehydrogenase"/>
    <property type="match status" value="1"/>
</dbReference>
<dbReference type="HAMAP" id="MF_03001">
    <property type="entry name" value="eIF3b"/>
    <property type="match status" value="1"/>
</dbReference>
<dbReference type="InterPro" id="IPR011400">
    <property type="entry name" value="EIF3B"/>
</dbReference>
<dbReference type="InterPro" id="IPR034363">
    <property type="entry name" value="eIF3B_RRM"/>
</dbReference>
<dbReference type="InterPro" id="IPR012677">
    <property type="entry name" value="Nucleotide-bd_a/b_plait_sf"/>
</dbReference>
<dbReference type="InterPro" id="IPR035979">
    <property type="entry name" value="RBD_domain_sf"/>
</dbReference>
<dbReference type="InterPro" id="IPR000504">
    <property type="entry name" value="RRM_dom"/>
</dbReference>
<dbReference type="InterPro" id="IPR013979">
    <property type="entry name" value="TIF_beta_prop-like"/>
</dbReference>
<dbReference type="InterPro" id="IPR015943">
    <property type="entry name" value="WD40/YVTN_repeat-like_dom_sf"/>
</dbReference>
<dbReference type="PANTHER" id="PTHR14068">
    <property type="entry name" value="EUKARYOTIC TRANSLATION INITIATION FACTOR 3 EIF3 -RELATED"/>
    <property type="match status" value="1"/>
</dbReference>
<dbReference type="PANTHER" id="PTHR14068:SF0">
    <property type="entry name" value="EUKARYOTIC TRANSLATION INITIATION FACTOR 3 SUBUNIT B"/>
    <property type="match status" value="1"/>
</dbReference>
<dbReference type="Pfam" id="PF08662">
    <property type="entry name" value="eIF2A"/>
    <property type="match status" value="1"/>
</dbReference>
<dbReference type="PIRSF" id="PIRSF036424">
    <property type="entry name" value="eIF3b"/>
    <property type="match status" value="1"/>
</dbReference>
<dbReference type="SMART" id="SM00360">
    <property type="entry name" value="RRM"/>
    <property type="match status" value="1"/>
</dbReference>
<dbReference type="SUPFAM" id="SSF82171">
    <property type="entry name" value="DPP6 N-terminal domain-like"/>
    <property type="match status" value="1"/>
</dbReference>
<dbReference type="SUPFAM" id="SSF54928">
    <property type="entry name" value="RNA-binding domain, RBD"/>
    <property type="match status" value="1"/>
</dbReference>
<dbReference type="PROSITE" id="PS50102">
    <property type="entry name" value="RRM"/>
    <property type="match status" value="1"/>
</dbReference>
<organism>
    <name type="scientific">Pyricularia oryzae (strain 70-15 / ATCC MYA-4617 / FGSC 8958)</name>
    <name type="common">Rice blast fungus</name>
    <name type="synonym">Magnaporthe oryzae</name>
    <dbReference type="NCBI Taxonomy" id="242507"/>
    <lineage>
        <taxon>Eukaryota</taxon>
        <taxon>Fungi</taxon>
        <taxon>Dikarya</taxon>
        <taxon>Ascomycota</taxon>
        <taxon>Pezizomycotina</taxon>
        <taxon>Sordariomycetes</taxon>
        <taxon>Sordariomycetidae</taxon>
        <taxon>Magnaporthales</taxon>
        <taxon>Pyriculariaceae</taxon>
        <taxon>Pyricularia</taxon>
    </lineage>
</organism>
<reference key="1">
    <citation type="journal article" date="2005" name="Nature">
        <title>The genome sequence of the rice blast fungus Magnaporthe grisea.</title>
        <authorList>
            <person name="Dean R.A."/>
            <person name="Talbot N.J."/>
            <person name="Ebbole D.J."/>
            <person name="Farman M.L."/>
            <person name="Mitchell T.K."/>
            <person name="Orbach M.J."/>
            <person name="Thon M.R."/>
            <person name="Kulkarni R."/>
            <person name="Xu J.-R."/>
            <person name="Pan H."/>
            <person name="Read N.D."/>
            <person name="Lee Y.-H."/>
            <person name="Carbone I."/>
            <person name="Brown D."/>
            <person name="Oh Y.Y."/>
            <person name="Donofrio N."/>
            <person name="Jeong J.S."/>
            <person name="Soanes D.M."/>
            <person name="Djonovic S."/>
            <person name="Kolomiets E."/>
            <person name="Rehmeyer C."/>
            <person name="Li W."/>
            <person name="Harding M."/>
            <person name="Kim S."/>
            <person name="Lebrun M.-H."/>
            <person name="Bohnert H."/>
            <person name="Coughlan S."/>
            <person name="Butler J."/>
            <person name="Calvo S.E."/>
            <person name="Ma L.-J."/>
            <person name="Nicol R."/>
            <person name="Purcell S."/>
            <person name="Nusbaum C."/>
            <person name="Galagan J.E."/>
            <person name="Birren B.W."/>
        </authorList>
    </citation>
    <scope>NUCLEOTIDE SEQUENCE [LARGE SCALE GENOMIC DNA]</scope>
    <source>
        <strain>70-15 / ATCC MYA-4617 / FGSC 8958</strain>
    </source>
</reference>
<gene>
    <name evidence="1" type="primary">PRT1</name>
    <name type="ORF">MGG_01978</name>
</gene>
<comment type="function">
    <text evidence="1">RNA-binding component of the eukaryotic translation initiation factor 3 (eIF-3) complex, which is involved in protein synthesis of a specialized repertoire of mRNAs and, together with other initiation factors, stimulates binding of mRNA and methionyl-tRNAi to the 40S ribosome. The eIF-3 complex specifically targets and initiates translation of a subset of mRNAs involved in cell proliferation.</text>
</comment>
<comment type="subunit">
    <text evidence="1">Component of the eukaryotic translation initiation factor 3 (eIF-3) complex.</text>
</comment>
<comment type="subcellular location">
    <subcellularLocation>
        <location evidence="1">Cytoplasm</location>
    </subcellularLocation>
</comment>
<comment type="similarity">
    <text evidence="1">Belongs to the eIF-3 subunit B family.</text>
</comment>
<accession>A4QZL9</accession>
<accession>G4MMB8</accession>
<keyword id="KW-0963">Cytoplasm</keyword>
<keyword id="KW-0396">Initiation factor</keyword>
<keyword id="KW-0648">Protein biosynthesis</keyword>
<keyword id="KW-1185">Reference proteome</keyword>
<keyword id="KW-0677">Repeat</keyword>
<keyword id="KW-0694">RNA-binding</keyword>
<keyword id="KW-0853">WD repeat</keyword>
<feature type="chain" id="PRO_0000363821" description="Eukaryotic translation initiation factor 3 subunit B">
    <location>
        <begin position="1"/>
        <end position="746"/>
    </location>
</feature>
<feature type="domain" description="RRM" evidence="1">
    <location>
        <begin position="42"/>
        <end position="128"/>
    </location>
</feature>
<feature type="repeat" description="WD 1">
    <location>
        <begin position="195"/>
        <end position="234"/>
    </location>
</feature>
<feature type="repeat" description="WD 2">
    <location>
        <begin position="247"/>
        <end position="294"/>
    </location>
</feature>
<feature type="repeat" description="WD 3">
    <location>
        <begin position="307"/>
        <end position="346"/>
    </location>
</feature>
<feature type="repeat" description="WD 4">
    <location>
        <begin position="349"/>
        <end position="386"/>
    </location>
</feature>
<feature type="repeat" description="WD 5">
    <location>
        <begin position="458"/>
        <end position="500"/>
    </location>
</feature>
<feature type="repeat" description="WD 6">
    <location>
        <begin position="517"/>
        <end position="560"/>
    </location>
</feature>
<feature type="repeat" description="WD 7">
    <location>
        <begin position="575"/>
        <end position="620"/>
    </location>
</feature>
<feature type="region of interest" description="Disordered" evidence="2">
    <location>
        <begin position="1"/>
        <end position="20"/>
    </location>
</feature>
<feature type="compositionally biased region" description="Basic and acidic residues" evidence="2">
    <location>
        <begin position="1"/>
        <end position="11"/>
    </location>
</feature>
<proteinExistence type="inferred from homology"/>
<name>EIF3B_PYRO7</name>
<evidence type="ECO:0000255" key="1">
    <source>
        <dbReference type="HAMAP-Rule" id="MF_03001"/>
    </source>
</evidence>
<evidence type="ECO:0000256" key="2">
    <source>
        <dbReference type="SAM" id="MobiDB-lite"/>
    </source>
</evidence>
<sequence>MAPSYEHLREADLDEDEFDEDEVDVSDLREKFEVQLEQGFDTFVVIDGLPEVTEEQKPKLVKFLLKKLTSVGKTKEDMIDMPMGPDGKSLRFAFVEYSSPGEAAAAVRQLDRVPLDKKHTLRVNKLMDVDRFGREGRIDDEYQPPHIDEFHPRDHLRSFMADPSGRGRDQFVMFRGDHVGVFWNNEKDTPENIVDRPNWTESFVQWSPLGTYLLSMHMQGVQLWGGPKWDRLGRFPHPFVNMAAFSPQENYLVTWSNRPISIPDEGHPALSMDDDGKNYVIWDIATGKPLRSFANLDLPPDDPNKPPRKHPWPAFKWSSDDKYVARLTQGQSISVYELPRMNLLDKTTIKVEGVQDFEWAPSRPQRDGVKTYEQMFCYWTPEIGSNPAKVGLMSIPSKEVVRSLNLFSVSDVKLHWQSEGAYLCVKVDRHSKSKKSQATTLEIFRVKEKGVPVEVVDTIKDTVINFAWEPKGDRFLIITTVTPTGEVAVQPKTAISFFCPEKSKGSTVGNFKHLRTLDKRNSNAIYWSPKGRFVVVATVHNQNSSDLDFFDLDFEGEKPEGEKDLTANLQLMNTADHYGITDVEWDPSGRFVATWASAWKHTMENGYHMYDFKGEQLREEAVEKFKQLQWRPRPPTLLAKEEQKQIRKNLREYSRVFEQEDAERIAGADQEVVDNRRRILEDWYEWRESVDVEVDEESAAMGVSSNPAEELLKAKTAEILASGQEEEQVIEEIVEEVLEESEEIVS</sequence>
<protein>
    <recommendedName>
        <fullName evidence="1">Eukaryotic translation initiation factor 3 subunit B</fullName>
        <shortName evidence="1">eIF3b</shortName>
    </recommendedName>
    <alternativeName>
        <fullName evidence="1">Eukaryotic translation initiation factor 3 90 kDa subunit homolog</fullName>
        <shortName evidence="1">eIF3 p90</shortName>
    </alternativeName>
    <alternativeName>
        <fullName>Translation initiation factor eIF3 p90 subunit homolog</fullName>
    </alternativeName>
</protein>